<sequence>MVLIRVLANLLILQLSYAQRSSELVIGGDECNINEHRFLALVYTDRFQCGGTLINPEWVLTAAHCDRRYMHIYLGVHNESVQYDDEQRRFPKKKYFCLSSKNYTRWDKDIMLIRLNRPVRNSAHIAHLSLPSKPPSVGSVCRVMGWGTITSPNETLPDVPRCANINLFNYTVCRGVFPWLPARSRILCAGVLQGGIDTCKRDSGGPLICNGQFQGIVSWGPKPCAQPREPALYTKVFDHLDWIQSIIAGNTTVTCPP</sequence>
<name>VSP5_TRIST</name>
<protein>
    <recommendedName>
        <fullName>Snake venom serine protease CL5</fullName>
        <shortName>SVSP</shortName>
        <ecNumber>3.4.21.-</ecNumber>
    </recommendedName>
</protein>
<evidence type="ECO:0000250" key="1"/>
<evidence type="ECO:0000255" key="2"/>
<evidence type="ECO:0000255" key="3">
    <source>
        <dbReference type="PROSITE-ProRule" id="PRU00274"/>
    </source>
</evidence>
<reference key="1">
    <citation type="submission" date="2001-06" db="EMBL/GenBank/DDBJ databases">
        <title>Identification of geographic variations and cloning of venom proteins of Trimeresurus stejnegeri: serine proteases and phospholipases.</title>
        <authorList>
            <person name="Tsai I.-H."/>
            <person name="Wang Y.-M."/>
        </authorList>
    </citation>
    <scope>NUCLEOTIDE SEQUENCE [MRNA]</scope>
    <source>
        <tissue>Venom gland</tissue>
    </source>
</reference>
<feature type="signal peptide" evidence="2">
    <location>
        <begin position="1"/>
        <end position="18"/>
    </location>
</feature>
<feature type="propeptide" id="PRO_0000296307" evidence="1">
    <location>
        <begin position="19"/>
        <end position="24"/>
    </location>
</feature>
<feature type="chain" id="PRO_5000061226" description="Snake venom serine protease CL5">
    <location>
        <begin position="25"/>
        <end position="257"/>
    </location>
</feature>
<feature type="domain" description="Peptidase S1" evidence="3">
    <location>
        <begin position="25"/>
        <end position="248"/>
    </location>
</feature>
<feature type="active site" description="Charge relay system" evidence="1">
    <location>
        <position position="64"/>
    </location>
</feature>
<feature type="active site" description="Charge relay system" evidence="1">
    <location>
        <position position="109"/>
    </location>
</feature>
<feature type="active site" description="Charge relay system" evidence="1">
    <location>
        <position position="203"/>
    </location>
</feature>
<feature type="glycosylation site" description="N-linked (GlcNAc...) asparagine" evidence="2">
    <location>
        <position position="78"/>
    </location>
</feature>
<feature type="glycosylation site" description="N-linked (GlcNAc...) asparagine" evidence="2">
    <location>
        <position position="102"/>
    </location>
</feature>
<feature type="glycosylation site" description="N-linked (GlcNAc...) asparagine" evidence="2">
    <location>
        <position position="153"/>
    </location>
</feature>
<feature type="glycosylation site" description="N-linked (GlcNAc...) asparagine" evidence="2">
    <location>
        <position position="169"/>
    </location>
</feature>
<feature type="glycosylation site" description="N-linked (GlcNAc...) asparagine" evidence="2">
    <location>
        <position position="250"/>
    </location>
</feature>
<feature type="disulfide bond" evidence="3">
    <location>
        <begin position="31"/>
        <end position="162"/>
    </location>
</feature>
<feature type="disulfide bond" evidence="3">
    <location>
        <begin position="49"/>
        <end position="65"/>
    </location>
</feature>
<feature type="disulfide bond" evidence="3">
    <location>
        <begin position="141"/>
        <end position="209"/>
    </location>
</feature>
<feature type="disulfide bond" evidence="3">
    <location>
        <begin position="173"/>
        <end position="188"/>
    </location>
</feature>
<feature type="disulfide bond" evidence="3">
    <location>
        <begin position="199"/>
        <end position="224"/>
    </location>
</feature>
<accession>Q71QI3</accession>
<organism>
    <name type="scientific">Trimeresurus stejnegeri</name>
    <name type="common">Chinese green tree viper</name>
    <name type="synonym">Viridovipera stejnegeri</name>
    <dbReference type="NCBI Taxonomy" id="39682"/>
    <lineage>
        <taxon>Eukaryota</taxon>
        <taxon>Metazoa</taxon>
        <taxon>Chordata</taxon>
        <taxon>Craniata</taxon>
        <taxon>Vertebrata</taxon>
        <taxon>Euteleostomi</taxon>
        <taxon>Lepidosauria</taxon>
        <taxon>Squamata</taxon>
        <taxon>Bifurcata</taxon>
        <taxon>Unidentata</taxon>
        <taxon>Episquamata</taxon>
        <taxon>Toxicofera</taxon>
        <taxon>Serpentes</taxon>
        <taxon>Colubroidea</taxon>
        <taxon>Viperidae</taxon>
        <taxon>Crotalinae</taxon>
        <taxon>Trimeresurus</taxon>
    </lineage>
</organism>
<proteinExistence type="evidence at transcript level"/>
<keyword id="KW-1015">Disulfide bond</keyword>
<keyword id="KW-0325">Glycoprotein</keyword>
<keyword id="KW-1199">Hemostasis impairing toxin</keyword>
<keyword id="KW-0378">Hydrolase</keyword>
<keyword id="KW-0645">Protease</keyword>
<keyword id="KW-0964">Secreted</keyword>
<keyword id="KW-0720">Serine protease</keyword>
<keyword id="KW-0732">Signal</keyword>
<keyword id="KW-0800">Toxin</keyword>
<keyword id="KW-0865">Zymogen</keyword>
<comment type="function">
    <text evidence="1">Snake venom serine protease that may act in the hemostasis system of the prey.</text>
</comment>
<comment type="subunit">
    <text evidence="1">Monomer.</text>
</comment>
<comment type="subcellular location">
    <subcellularLocation>
        <location evidence="1">Secreted</location>
    </subcellularLocation>
</comment>
<comment type="tissue specificity">
    <text>Expressed by the venom gland.</text>
</comment>
<comment type="similarity">
    <text evidence="3">Belongs to the peptidase S1 family. Snake venom subfamily.</text>
</comment>
<dbReference type="EC" id="3.4.21.-"/>
<dbReference type="EMBL" id="AF395774">
    <property type="protein sequence ID" value="AAQ02904.1"/>
    <property type="molecule type" value="mRNA"/>
</dbReference>
<dbReference type="SMR" id="Q71QI3"/>
<dbReference type="MEROPS" id="S01.341"/>
<dbReference type="GO" id="GO:0005576">
    <property type="term" value="C:extracellular region"/>
    <property type="evidence" value="ECO:0007669"/>
    <property type="project" value="UniProtKB-SubCell"/>
</dbReference>
<dbReference type="GO" id="GO:0030141">
    <property type="term" value="C:secretory granule"/>
    <property type="evidence" value="ECO:0007669"/>
    <property type="project" value="TreeGrafter"/>
</dbReference>
<dbReference type="GO" id="GO:0004252">
    <property type="term" value="F:serine-type endopeptidase activity"/>
    <property type="evidence" value="ECO:0007669"/>
    <property type="project" value="InterPro"/>
</dbReference>
<dbReference type="GO" id="GO:0090729">
    <property type="term" value="F:toxin activity"/>
    <property type="evidence" value="ECO:0007669"/>
    <property type="project" value="UniProtKB-KW"/>
</dbReference>
<dbReference type="GO" id="GO:0006508">
    <property type="term" value="P:proteolysis"/>
    <property type="evidence" value="ECO:0007669"/>
    <property type="project" value="UniProtKB-KW"/>
</dbReference>
<dbReference type="CDD" id="cd00190">
    <property type="entry name" value="Tryp_SPc"/>
    <property type="match status" value="1"/>
</dbReference>
<dbReference type="FunFam" id="2.40.10.10:FF:000158">
    <property type="entry name" value="Thrombin-like enzyme saxthrombin"/>
    <property type="match status" value="1"/>
</dbReference>
<dbReference type="Gene3D" id="2.40.10.10">
    <property type="entry name" value="Trypsin-like serine proteases"/>
    <property type="match status" value="2"/>
</dbReference>
<dbReference type="InterPro" id="IPR009003">
    <property type="entry name" value="Peptidase_S1_PA"/>
</dbReference>
<dbReference type="InterPro" id="IPR043504">
    <property type="entry name" value="Peptidase_S1_PA_chymotrypsin"/>
</dbReference>
<dbReference type="InterPro" id="IPR001314">
    <property type="entry name" value="Peptidase_S1A"/>
</dbReference>
<dbReference type="InterPro" id="IPR001254">
    <property type="entry name" value="Trypsin_dom"/>
</dbReference>
<dbReference type="InterPro" id="IPR018114">
    <property type="entry name" value="TRYPSIN_HIS"/>
</dbReference>
<dbReference type="PANTHER" id="PTHR24271:SF47">
    <property type="entry name" value="KALLIKREIN-1"/>
    <property type="match status" value="1"/>
</dbReference>
<dbReference type="PANTHER" id="PTHR24271">
    <property type="entry name" value="KALLIKREIN-RELATED"/>
    <property type="match status" value="1"/>
</dbReference>
<dbReference type="Pfam" id="PF00089">
    <property type="entry name" value="Trypsin"/>
    <property type="match status" value="1"/>
</dbReference>
<dbReference type="PRINTS" id="PR00722">
    <property type="entry name" value="CHYMOTRYPSIN"/>
</dbReference>
<dbReference type="SMART" id="SM00020">
    <property type="entry name" value="Tryp_SPc"/>
    <property type="match status" value="1"/>
</dbReference>
<dbReference type="SUPFAM" id="SSF50494">
    <property type="entry name" value="Trypsin-like serine proteases"/>
    <property type="match status" value="1"/>
</dbReference>
<dbReference type="PROSITE" id="PS50240">
    <property type="entry name" value="TRYPSIN_DOM"/>
    <property type="match status" value="1"/>
</dbReference>
<dbReference type="PROSITE" id="PS00134">
    <property type="entry name" value="TRYPSIN_HIS"/>
    <property type="match status" value="1"/>
</dbReference>